<dbReference type="EC" id="3.1.3.16"/>
<dbReference type="EMBL" id="AF134552">
    <property type="protein sequence ID" value="AAD22116.1"/>
    <property type="molecule type" value="Genomic_DNA"/>
</dbReference>
<dbReference type="EMBL" id="CM000128">
    <property type="protein sequence ID" value="EAY92250.1"/>
    <property type="status" value="ALT_FRAME"/>
    <property type="molecule type" value="Genomic_DNA"/>
</dbReference>
<dbReference type="EMBL" id="CT832173">
    <property type="status" value="NOT_ANNOTATED_CDS"/>
    <property type="molecule type" value="mRNA"/>
</dbReference>
<dbReference type="SMR" id="A2XN40"/>
<dbReference type="STRING" id="39946.A2XN40"/>
<dbReference type="BRENDA" id="3.1.3.16">
    <property type="organism ID" value="4460"/>
</dbReference>
<dbReference type="Proteomes" id="UP000007015">
    <property type="component" value="Chromosome 3"/>
</dbReference>
<dbReference type="GO" id="GO:0005737">
    <property type="term" value="C:cytoplasm"/>
    <property type="evidence" value="ECO:0007669"/>
    <property type="project" value="UniProtKB-SubCell"/>
</dbReference>
<dbReference type="GO" id="GO:0046872">
    <property type="term" value="F:metal ion binding"/>
    <property type="evidence" value="ECO:0007669"/>
    <property type="project" value="UniProtKB-KW"/>
</dbReference>
<dbReference type="GO" id="GO:0004722">
    <property type="term" value="F:protein serine/threonine phosphatase activity"/>
    <property type="evidence" value="ECO:0007669"/>
    <property type="project" value="UniProtKB-EC"/>
</dbReference>
<dbReference type="CDD" id="cd07415">
    <property type="entry name" value="MPP_PP2A_PP4_PP6"/>
    <property type="match status" value="1"/>
</dbReference>
<dbReference type="FunFam" id="3.60.21.10:FF:000003">
    <property type="entry name" value="Serine/threonine-protein phosphatase"/>
    <property type="match status" value="1"/>
</dbReference>
<dbReference type="Gene3D" id="3.60.21.10">
    <property type="match status" value="1"/>
</dbReference>
<dbReference type="InterPro" id="IPR004843">
    <property type="entry name" value="Calcineurin-like_PHP_ApaH"/>
</dbReference>
<dbReference type="InterPro" id="IPR029052">
    <property type="entry name" value="Metallo-depent_PP-like"/>
</dbReference>
<dbReference type="InterPro" id="IPR047129">
    <property type="entry name" value="PPA2-like"/>
</dbReference>
<dbReference type="InterPro" id="IPR006186">
    <property type="entry name" value="Ser/Thr-sp_prot-phosphatase"/>
</dbReference>
<dbReference type="PANTHER" id="PTHR45619">
    <property type="entry name" value="SERINE/THREONINE-PROTEIN PHOSPHATASE PP2A-RELATED"/>
    <property type="match status" value="1"/>
</dbReference>
<dbReference type="Pfam" id="PF00149">
    <property type="entry name" value="Metallophos"/>
    <property type="match status" value="1"/>
</dbReference>
<dbReference type="PRINTS" id="PR00114">
    <property type="entry name" value="STPHPHTASE"/>
</dbReference>
<dbReference type="SMART" id="SM00156">
    <property type="entry name" value="PP2Ac"/>
    <property type="match status" value="1"/>
</dbReference>
<dbReference type="SUPFAM" id="SSF56300">
    <property type="entry name" value="Metallo-dependent phosphatases"/>
    <property type="match status" value="1"/>
</dbReference>
<dbReference type="PROSITE" id="PS00125">
    <property type="entry name" value="SER_THR_PHOSPHATASE"/>
    <property type="match status" value="1"/>
</dbReference>
<evidence type="ECO:0000250" key="1"/>
<evidence type="ECO:0000305" key="2"/>
<protein>
    <recommendedName>
        <fullName>Serine/threonine-protein phosphatase PP2A-2 catalytic subunit</fullName>
        <ecNumber>3.1.3.16</ecNumber>
    </recommendedName>
</protein>
<accession>A2XN40</accession>
<accession>Q75HI9</accession>
<accession>Q9XF94</accession>
<keyword id="KW-0963">Cytoplasm</keyword>
<keyword id="KW-0378">Hydrolase</keyword>
<keyword id="KW-0464">Manganese</keyword>
<keyword id="KW-0479">Metal-binding</keyword>
<keyword id="KW-0904">Protein phosphatase</keyword>
<keyword id="KW-1185">Reference proteome</keyword>
<sequence length="307" mass="35243">MSSPHGGLDDQIERLMQCKPLPEPEVRALCEKAKEILMEESNVQPVKSPVTICGDIHGQFHDLAELFRIGGKCPDTNYLFMGDYVDRGYYSVETVTLLVALKVRYPQRITILRGNHESRQITQVYGFYDECLRKYGNANVWKTFTDLFDYFPLTALVESEIFCLHGGLSPSIETLDNIRNFDRVQEVPHEGPMCDLLWSDPDDRCGWGISPRGAGYTFGQDISEQFNHTNNLRLIARAHQLVMEGFNWAHEQKVVTIFSAPNYCYRCGNMASILEVDDCREHTFIQFEPAPRRGEPDVTRRTPDYFL</sequence>
<comment type="catalytic activity">
    <reaction>
        <text>O-phospho-L-seryl-[protein] + H2O = L-seryl-[protein] + phosphate</text>
        <dbReference type="Rhea" id="RHEA:20629"/>
        <dbReference type="Rhea" id="RHEA-COMP:9863"/>
        <dbReference type="Rhea" id="RHEA-COMP:11604"/>
        <dbReference type="ChEBI" id="CHEBI:15377"/>
        <dbReference type="ChEBI" id="CHEBI:29999"/>
        <dbReference type="ChEBI" id="CHEBI:43474"/>
        <dbReference type="ChEBI" id="CHEBI:83421"/>
        <dbReference type="EC" id="3.1.3.16"/>
    </reaction>
</comment>
<comment type="catalytic activity">
    <reaction>
        <text>O-phospho-L-threonyl-[protein] + H2O = L-threonyl-[protein] + phosphate</text>
        <dbReference type="Rhea" id="RHEA:47004"/>
        <dbReference type="Rhea" id="RHEA-COMP:11060"/>
        <dbReference type="Rhea" id="RHEA-COMP:11605"/>
        <dbReference type="ChEBI" id="CHEBI:15377"/>
        <dbReference type="ChEBI" id="CHEBI:30013"/>
        <dbReference type="ChEBI" id="CHEBI:43474"/>
        <dbReference type="ChEBI" id="CHEBI:61977"/>
        <dbReference type="EC" id="3.1.3.16"/>
    </reaction>
</comment>
<comment type="cofactor">
    <cofactor evidence="1">
        <name>Mn(2+)</name>
        <dbReference type="ChEBI" id="CHEBI:29035"/>
    </cofactor>
    <text evidence="1">Binds 2 manganese ions per subunit.</text>
</comment>
<comment type="subcellular location">
    <subcellularLocation>
        <location evidence="1">Cytoplasm</location>
    </subcellularLocation>
</comment>
<comment type="similarity">
    <text evidence="2">Belongs to the PPP phosphatase family. PP-2A subfamily.</text>
</comment>
<comment type="sequence caution" evidence="2">
    <conflict type="frameshift">
        <sequence resource="EMBL-CDS" id="EAY92250"/>
    </conflict>
</comment>
<gene>
    <name type="primary">PP2A2</name>
    <name type="ORF">OsI_013483</name>
</gene>
<name>PP2A2_ORYSI</name>
<organism>
    <name type="scientific">Oryza sativa subsp. indica</name>
    <name type="common">Rice</name>
    <dbReference type="NCBI Taxonomy" id="39946"/>
    <lineage>
        <taxon>Eukaryota</taxon>
        <taxon>Viridiplantae</taxon>
        <taxon>Streptophyta</taxon>
        <taxon>Embryophyta</taxon>
        <taxon>Tracheophyta</taxon>
        <taxon>Spermatophyta</taxon>
        <taxon>Magnoliopsida</taxon>
        <taxon>Liliopsida</taxon>
        <taxon>Poales</taxon>
        <taxon>Poaceae</taxon>
        <taxon>BOP clade</taxon>
        <taxon>Oryzoideae</taxon>
        <taxon>Oryzeae</taxon>
        <taxon>Oryzinae</taxon>
        <taxon>Oryza</taxon>
        <taxon>Oryza sativa</taxon>
    </lineage>
</organism>
<reference key="1">
    <citation type="submission" date="1999-03" db="EMBL/GenBank/DDBJ databases">
        <title>Molecular cloning and characterization of protein phosphatase 2A catalytic subunit genes from Oryza sativa.</title>
        <authorList>
            <person name="Yu R.M.K."/>
            <person name="Kong R.Y.C."/>
        </authorList>
    </citation>
    <scope>NUCLEOTIDE SEQUENCE [GENOMIC DNA]</scope>
    <source>
        <strain>cv. IR36</strain>
    </source>
</reference>
<reference key="2">
    <citation type="journal article" date="2005" name="PLoS Biol.">
        <title>The genomes of Oryza sativa: a history of duplications.</title>
        <authorList>
            <person name="Yu J."/>
            <person name="Wang J."/>
            <person name="Lin W."/>
            <person name="Li S."/>
            <person name="Li H."/>
            <person name="Zhou J."/>
            <person name="Ni P."/>
            <person name="Dong W."/>
            <person name="Hu S."/>
            <person name="Zeng C."/>
            <person name="Zhang J."/>
            <person name="Zhang Y."/>
            <person name="Li R."/>
            <person name="Xu Z."/>
            <person name="Li S."/>
            <person name="Li X."/>
            <person name="Zheng H."/>
            <person name="Cong L."/>
            <person name="Lin L."/>
            <person name="Yin J."/>
            <person name="Geng J."/>
            <person name="Li G."/>
            <person name="Shi J."/>
            <person name="Liu J."/>
            <person name="Lv H."/>
            <person name="Li J."/>
            <person name="Wang J."/>
            <person name="Deng Y."/>
            <person name="Ran L."/>
            <person name="Shi X."/>
            <person name="Wang X."/>
            <person name="Wu Q."/>
            <person name="Li C."/>
            <person name="Ren X."/>
            <person name="Wang J."/>
            <person name="Wang X."/>
            <person name="Li D."/>
            <person name="Liu D."/>
            <person name="Zhang X."/>
            <person name="Ji Z."/>
            <person name="Zhao W."/>
            <person name="Sun Y."/>
            <person name="Zhang Z."/>
            <person name="Bao J."/>
            <person name="Han Y."/>
            <person name="Dong L."/>
            <person name="Ji J."/>
            <person name="Chen P."/>
            <person name="Wu S."/>
            <person name="Liu J."/>
            <person name="Xiao Y."/>
            <person name="Bu D."/>
            <person name="Tan J."/>
            <person name="Yang L."/>
            <person name="Ye C."/>
            <person name="Zhang J."/>
            <person name="Xu J."/>
            <person name="Zhou Y."/>
            <person name="Yu Y."/>
            <person name="Zhang B."/>
            <person name="Zhuang S."/>
            <person name="Wei H."/>
            <person name="Liu B."/>
            <person name="Lei M."/>
            <person name="Yu H."/>
            <person name="Li Y."/>
            <person name="Xu H."/>
            <person name="Wei S."/>
            <person name="He X."/>
            <person name="Fang L."/>
            <person name="Zhang Z."/>
            <person name="Zhang Y."/>
            <person name="Huang X."/>
            <person name="Su Z."/>
            <person name="Tong W."/>
            <person name="Li J."/>
            <person name="Tong Z."/>
            <person name="Li S."/>
            <person name="Ye J."/>
            <person name="Wang L."/>
            <person name="Fang L."/>
            <person name="Lei T."/>
            <person name="Chen C.-S."/>
            <person name="Chen H.-C."/>
            <person name="Xu Z."/>
            <person name="Li H."/>
            <person name="Huang H."/>
            <person name="Zhang F."/>
            <person name="Xu H."/>
            <person name="Li N."/>
            <person name="Zhao C."/>
            <person name="Li S."/>
            <person name="Dong L."/>
            <person name="Huang Y."/>
            <person name="Li L."/>
            <person name="Xi Y."/>
            <person name="Qi Q."/>
            <person name="Li W."/>
            <person name="Zhang B."/>
            <person name="Hu W."/>
            <person name="Zhang Y."/>
            <person name="Tian X."/>
            <person name="Jiao Y."/>
            <person name="Liang X."/>
            <person name="Jin J."/>
            <person name="Gao L."/>
            <person name="Zheng W."/>
            <person name="Hao B."/>
            <person name="Liu S.-M."/>
            <person name="Wang W."/>
            <person name="Yuan L."/>
            <person name="Cao M."/>
            <person name="McDermott J."/>
            <person name="Samudrala R."/>
            <person name="Wang J."/>
            <person name="Wong G.K.-S."/>
            <person name="Yang H."/>
        </authorList>
    </citation>
    <scope>NUCLEOTIDE SEQUENCE [LARGE SCALE GENOMIC DNA]</scope>
    <source>
        <strain>cv. 93-11</strain>
    </source>
</reference>
<reference key="3">
    <citation type="journal article" date="2007" name="Plant Mol. Biol.">
        <title>A collection of 10,096 indica rice full-length cDNAs reveals highly expressed sequence divergence between Oryza sativa indica and japonica subspecies.</title>
        <authorList>
            <person name="Liu X."/>
            <person name="Lu T."/>
            <person name="Yu S."/>
            <person name="Li Y."/>
            <person name="Huang Y."/>
            <person name="Huang T."/>
            <person name="Zhang L."/>
            <person name="Zhu J."/>
            <person name="Zhao Q."/>
            <person name="Fan D."/>
            <person name="Mu J."/>
            <person name="Shangguan Y."/>
            <person name="Feng Q."/>
            <person name="Guan J."/>
            <person name="Ying K."/>
            <person name="Zhang Y."/>
            <person name="Lin Z."/>
            <person name="Sun Z."/>
            <person name="Qian Q."/>
            <person name="Lu Y."/>
            <person name="Han B."/>
        </authorList>
    </citation>
    <scope>NUCLEOTIDE SEQUENCE [LARGE SCALE MRNA]</scope>
    <source>
        <strain>cv. Guang-Lu-Ai No.4</strain>
    </source>
</reference>
<feature type="chain" id="PRO_0000301656" description="Serine/threonine-protein phosphatase PP2A-2 catalytic subunit">
    <location>
        <begin position="1"/>
        <end position="307"/>
    </location>
</feature>
<feature type="active site" description="Proton donor" evidence="1">
    <location>
        <position position="116"/>
    </location>
</feature>
<feature type="binding site" evidence="1">
    <location>
        <position position="55"/>
    </location>
    <ligand>
        <name>Mn(2+)</name>
        <dbReference type="ChEBI" id="CHEBI:29035"/>
        <label>1</label>
    </ligand>
</feature>
<feature type="binding site" evidence="1">
    <location>
        <position position="57"/>
    </location>
    <ligand>
        <name>Mn(2+)</name>
        <dbReference type="ChEBI" id="CHEBI:29035"/>
        <label>1</label>
    </ligand>
</feature>
<feature type="binding site" evidence="1">
    <location>
        <position position="83"/>
    </location>
    <ligand>
        <name>Mn(2+)</name>
        <dbReference type="ChEBI" id="CHEBI:29035"/>
        <label>1</label>
    </ligand>
</feature>
<feature type="binding site" evidence="1">
    <location>
        <position position="83"/>
    </location>
    <ligand>
        <name>Mn(2+)</name>
        <dbReference type="ChEBI" id="CHEBI:29035"/>
        <label>2</label>
    </ligand>
</feature>
<feature type="binding site" evidence="1">
    <location>
        <position position="115"/>
    </location>
    <ligand>
        <name>Mn(2+)</name>
        <dbReference type="ChEBI" id="CHEBI:29035"/>
        <label>2</label>
    </ligand>
</feature>
<feature type="binding site" evidence="1">
    <location>
        <position position="165"/>
    </location>
    <ligand>
        <name>Mn(2+)</name>
        <dbReference type="ChEBI" id="CHEBI:29035"/>
        <label>2</label>
    </ligand>
</feature>
<feature type="binding site" evidence="1">
    <location>
        <position position="239"/>
    </location>
    <ligand>
        <name>Mn(2+)</name>
        <dbReference type="ChEBI" id="CHEBI:29035"/>
        <label>2</label>
    </ligand>
</feature>
<feature type="sequence conflict" description="In Ref. 3; CT832173." evidence="2" ref="3">
    <original>NV</original>
    <variation>SG</variation>
    <location>
        <begin position="42"/>
        <end position="43"/>
    </location>
</feature>
<feature type="sequence conflict" description="In Ref. 3; CT832173." evidence="2" ref="3">
    <original>N</original>
    <variation>D</variation>
    <location>
        <position position="177"/>
    </location>
</feature>
<feature type="sequence conflict" description="In Ref. 3; CT832173." evidence="2" ref="3">
    <original>D</original>
    <variation>E</variation>
    <location>
        <position position="277"/>
    </location>
</feature>
<feature type="sequence conflict" description="In Ref. 3; CT832173." evidence="2" ref="3">
    <original>L</original>
    <variation>R</variation>
    <location>
        <position position="307"/>
    </location>
</feature>
<proteinExistence type="evidence at transcript level"/>